<reference key="1">
    <citation type="journal article" date="2007" name="PLoS Genet.">
        <title>Patterns and implications of gene gain and loss in the evolution of Prochlorococcus.</title>
        <authorList>
            <person name="Kettler G.C."/>
            <person name="Martiny A.C."/>
            <person name="Huang K."/>
            <person name="Zucker J."/>
            <person name="Coleman M.L."/>
            <person name="Rodrigue S."/>
            <person name="Chen F."/>
            <person name="Lapidus A."/>
            <person name="Ferriera S."/>
            <person name="Johnson J."/>
            <person name="Steglich C."/>
            <person name="Church G.M."/>
            <person name="Richardson P."/>
            <person name="Chisholm S.W."/>
        </authorList>
    </citation>
    <scope>NUCLEOTIDE SEQUENCE [LARGE SCALE GENOMIC DNA]</scope>
    <source>
        <strain>NATL1A</strain>
    </source>
</reference>
<organism>
    <name type="scientific">Prochlorococcus marinus (strain NATL1A)</name>
    <dbReference type="NCBI Taxonomy" id="167555"/>
    <lineage>
        <taxon>Bacteria</taxon>
        <taxon>Bacillati</taxon>
        <taxon>Cyanobacteriota</taxon>
        <taxon>Cyanophyceae</taxon>
        <taxon>Synechococcales</taxon>
        <taxon>Prochlorococcaceae</taxon>
        <taxon>Prochlorococcus</taxon>
    </lineage>
</organism>
<evidence type="ECO:0000255" key="1">
    <source>
        <dbReference type="HAMAP-Rule" id="MF_00046"/>
    </source>
</evidence>
<feature type="chain" id="PRO_1000004386" description="UDP-N-acetylmuramate--L-alanine ligase">
    <location>
        <begin position="1"/>
        <end position="494"/>
    </location>
</feature>
<feature type="binding site" evidence="1">
    <location>
        <begin position="134"/>
        <end position="140"/>
    </location>
    <ligand>
        <name>ATP</name>
        <dbReference type="ChEBI" id="CHEBI:30616"/>
    </ligand>
</feature>
<protein>
    <recommendedName>
        <fullName evidence="1">UDP-N-acetylmuramate--L-alanine ligase</fullName>
        <ecNumber evidence="1">6.3.2.8</ecNumber>
    </recommendedName>
    <alternativeName>
        <fullName evidence="1">UDP-N-acetylmuramoyl-L-alanine synthetase</fullName>
    </alternativeName>
</protein>
<proteinExistence type="inferred from homology"/>
<keyword id="KW-0067">ATP-binding</keyword>
<keyword id="KW-0131">Cell cycle</keyword>
<keyword id="KW-0132">Cell division</keyword>
<keyword id="KW-0133">Cell shape</keyword>
<keyword id="KW-0961">Cell wall biogenesis/degradation</keyword>
<keyword id="KW-0963">Cytoplasm</keyword>
<keyword id="KW-0436">Ligase</keyword>
<keyword id="KW-0547">Nucleotide-binding</keyword>
<keyword id="KW-0573">Peptidoglycan synthesis</keyword>
<gene>
    <name evidence="1" type="primary">murC</name>
    <name type="ordered locus">NATL1_00211</name>
</gene>
<sequence>MTSYLSNDTEAKLKKTKELPPHIHFIGIGGIGMSALAMILAQKGYSISGSDQKKNLTLKKLEENKVHIFPTQVESNIDEILKVHGKNILVVKSSAIHRDNLELCKAKKYNLKIKHRSEILAFLIEEKKSIIVSGSHGKTTTSTYITTLFSYANKSPTAIIGGIVPLYKSNYSFGKSEFLIAEADESDGSLVKFNPNIGLITNLELEHVDHYLDLEDLIETMKQFAQKCECLITNFDCDNLRANIHGSKWFSIQKIINIDFALIPKESNGCEIIAEYYEKEKFIDVIKIPVPGIHNLSNAAAAIAACRVAGILFKDIKKGIEKLKLPSRRFEFKGLWRNRLIVEDYAHHPSEIDAAISIASTIIETKHKLSKILPRRIVTIFQPHRYSRTKKFQKEFAKTLSQSDLVFITPIYSAGEDKIEGINNKSIGHELKKIKPNLEIYTPDNNQNLIKLIKEKTLENDLILIMGAGDINLISENLFLELLNNKLISNDIAA</sequence>
<accession>A2BZC5</accession>
<comment type="function">
    <text evidence="1">Cell wall formation.</text>
</comment>
<comment type="catalytic activity">
    <reaction evidence="1">
        <text>UDP-N-acetyl-alpha-D-muramate + L-alanine + ATP = UDP-N-acetyl-alpha-D-muramoyl-L-alanine + ADP + phosphate + H(+)</text>
        <dbReference type="Rhea" id="RHEA:23372"/>
        <dbReference type="ChEBI" id="CHEBI:15378"/>
        <dbReference type="ChEBI" id="CHEBI:30616"/>
        <dbReference type="ChEBI" id="CHEBI:43474"/>
        <dbReference type="ChEBI" id="CHEBI:57972"/>
        <dbReference type="ChEBI" id="CHEBI:70757"/>
        <dbReference type="ChEBI" id="CHEBI:83898"/>
        <dbReference type="ChEBI" id="CHEBI:456216"/>
        <dbReference type="EC" id="6.3.2.8"/>
    </reaction>
</comment>
<comment type="pathway">
    <text evidence="1">Cell wall biogenesis; peptidoglycan biosynthesis.</text>
</comment>
<comment type="subcellular location">
    <subcellularLocation>
        <location evidence="1">Cytoplasm</location>
    </subcellularLocation>
</comment>
<comment type="similarity">
    <text evidence="1">Belongs to the MurCDEF family.</text>
</comment>
<name>MURC_PROM1</name>
<dbReference type="EC" id="6.3.2.8" evidence="1"/>
<dbReference type="EMBL" id="CP000553">
    <property type="protein sequence ID" value="ABM74585.1"/>
    <property type="molecule type" value="Genomic_DNA"/>
</dbReference>
<dbReference type="RefSeq" id="WP_011822823.1">
    <property type="nucleotide sequence ID" value="NC_008819.1"/>
</dbReference>
<dbReference type="SMR" id="A2BZC5"/>
<dbReference type="KEGG" id="pme:NATL1_00211"/>
<dbReference type="eggNOG" id="COG0773">
    <property type="taxonomic scope" value="Bacteria"/>
</dbReference>
<dbReference type="HOGENOM" id="CLU_028104_2_2_3"/>
<dbReference type="UniPathway" id="UPA00219"/>
<dbReference type="Proteomes" id="UP000002592">
    <property type="component" value="Chromosome"/>
</dbReference>
<dbReference type="GO" id="GO:0005737">
    <property type="term" value="C:cytoplasm"/>
    <property type="evidence" value="ECO:0007669"/>
    <property type="project" value="UniProtKB-SubCell"/>
</dbReference>
<dbReference type="GO" id="GO:0005524">
    <property type="term" value="F:ATP binding"/>
    <property type="evidence" value="ECO:0007669"/>
    <property type="project" value="UniProtKB-UniRule"/>
</dbReference>
<dbReference type="GO" id="GO:0008763">
    <property type="term" value="F:UDP-N-acetylmuramate-L-alanine ligase activity"/>
    <property type="evidence" value="ECO:0007669"/>
    <property type="project" value="UniProtKB-UniRule"/>
</dbReference>
<dbReference type="GO" id="GO:0051301">
    <property type="term" value="P:cell division"/>
    <property type="evidence" value="ECO:0007669"/>
    <property type="project" value="UniProtKB-KW"/>
</dbReference>
<dbReference type="GO" id="GO:0071555">
    <property type="term" value="P:cell wall organization"/>
    <property type="evidence" value="ECO:0007669"/>
    <property type="project" value="UniProtKB-KW"/>
</dbReference>
<dbReference type="GO" id="GO:0009252">
    <property type="term" value="P:peptidoglycan biosynthetic process"/>
    <property type="evidence" value="ECO:0007669"/>
    <property type="project" value="UniProtKB-UniRule"/>
</dbReference>
<dbReference type="GO" id="GO:0008360">
    <property type="term" value="P:regulation of cell shape"/>
    <property type="evidence" value="ECO:0007669"/>
    <property type="project" value="UniProtKB-KW"/>
</dbReference>
<dbReference type="Gene3D" id="3.90.190.20">
    <property type="entry name" value="Mur ligase, C-terminal domain"/>
    <property type="match status" value="1"/>
</dbReference>
<dbReference type="Gene3D" id="3.40.1190.10">
    <property type="entry name" value="Mur-like, catalytic domain"/>
    <property type="match status" value="1"/>
</dbReference>
<dbReference type="Gene3D" id="3.40.50.720">
    <property type="entry name" value="NAD(P)-binding Rossmann-like Domain"/>
    <property type="match status" value="1"/>
</dbReference>
<dbReference type="HAMAP" id="MF_00046">
    <property type="entry name" value="MurC"/>
    <property type="match status" value="1"/>
</dbReference>
<dbReference type="InterPro" id="IPR036565">
    <property type="entry name" value="Mur-like_cat_sf"/>
</dbReference>
<dbReference type="InterPro" id="IPR004101">
    <property type="entry name" value="Mur_ligase_C"/>
</dbReference>
<dbReference type="InterPro" id="IPR036615">
    <property type="entry name" value="Mur_ligase_C_dom_sf"/>
</dbReference>
<dbReference type="InterPro" id="IPR013221">
    <property type="entry name" value="Mur_ligase_cen"/>
</dbReference>
<dbReference type="InterPro" id="IPR000713">
    <property type="entry name" value="Mur_ligase_N"/>
</dbReference>
<dbReference type="InterPro" id="IPR050061">
    <property type="entry name" value="MurCDEF_pg_biosynth"/>
</dbReference>
<dbReference type="InterPro" id="IPR005758">
    <property type="entry name" value="UDP-N-AcMur_Ala_ligase_MurC"/>
</dbReference>
<dbReference type="NCBIfam" id="TIGR01082">
    <property type="entry name" value="murC"/>
    <property type="match status" value="1"/>
</dbReference>
<dbReference type="PANTHER" id="PTHR43445:SF3">
    <property type="entry name" value="UDP-N-ACETYLMURAMATE--L-ALANINE LIGASE"/>
    <property type="match status" value="1"/>
</dbReference>
<dbReference type="PANTHER" id="PTHR43445">
    <property type="entry name" value="UDP-N-ACETYLMURAMATE--L-ALANINE LIGASE-RELATED"/>
    <property type="match status" value="1"/>
</dbReference>
<dbReference type="Pfam" id="PF01225">
    <property type="entry name" value="Mur_ligase"/>
    <property type="match status" value="1"/>
</dbReference>
<dbReference type="Pfam" id="PF02875">
    <property type="entry name" value="Mur_ligase_C"/>
    <property type="match status" value="1"/>
</dbReference>
<dbReference type="Pfam" id="PF08245">
    <property type="entry name" value="Mur_ligase_M"/>
    <property type="match status" value="1"/>
</dbReference>
<dbReference type="SUPFAM" id="SSF51984">
    <property type="entry name" value="MurCD N-terminal domain"/>
    <property type="match status" value="1"/>
</dbReference>
<dbReference type="SUPFAM" id="SSF53623">
    <property type="entry name" value="MurD-like peptide ligases, catalytic domain"/>
    <property type="match status" value="1"/>
</dbReference>
<dbReference type="SUPFAM" id="SSF53244">
    <property type="entry name" value="MurD-like peptide ligases, peptide-binding domain"/>
    <property type="match status" value="1"/>
</dbReference>